<organism>
    <name type="scientific">Mycobacterium marinum (strain ATCC BAA-535 / M)</name>
    <dbReference type="NCBI Taxonomy" id="216594"/>
    <lineage>
        <taxon>Bacteria</taxon>
        <taxon>Bacillati</taxon>
        <taxon>Actinomycetota</taxon>
        <taxon>Actinomycetes</taxon>
        <taxon>Mycobacteriales</taxon>
        <taxon>Mycobacteriaceae</taxon>
        <taxon>Mycobacterium</taxon>
        <taxon>Mycobacterium ulcerans group</taxon>
    </lineage>
</organism>
<keyword id="KW-1185">Reference proteome</keyword>
<keyword id="KW-0687">Ribonucleoprotein</keyword>
<keyword id="KW-0689">Ribosomal protein</keyword>
<name>RL13_MYCMM</name>
<comment type="function">
    <text evidence="1">This protein is one of the early assembly proteins of the 50S ribosomal subunit, although it is not seen to bind rRNA by itself. It is important during the early stages of 50S assembly.</text>
</comment>
<comment type="subunit">
    <text evidence="1">Part of the 50S ribosomal subunit.</text>
</comment>
<comment type="similarity">
    <text evidence="1">Belongs to the universal ribosomal protein uL13 family.</text>
</comment>
<gene>
    <name evidence="1" type="primary">rplM</name>
    <name type="ordered locus">MMAR_1106</name>
</gene>
<feature type="chain" id="PRO_1000144156" description="Large ribosomal subunit protein uL13">
    <location>
        <begin position="1"/>
        <end position="147"/>
    </location>
</feature>
<accession>B2HCZ0</accession>
<sequence length="147" mass="16181">MPTYAPKAGDTTRSWYVIDATDVVLGRLAVAAANLLRGKHKPTFAPNVDGGDFVIVINADKVAISNEKLRNKMAYSHSGYPGGLRKRSIGELMEKHPDRVVEKAIVGMLPKNKLSRQIQSKLRVYAGPEHPHTAQQPVPFEIKQVAQ</sequence>
<reference key="1">
    <citation type="journal article" date="2008" name="Genome Res.">
        <title>Insights from the complete genome sequence of Mycobacterium marinum on the evolution of Mycobacterium tuberculosis.</title>
        <authorList>
            <person name="Stinear T.P."/>
            <person name="Seemann T."/>
            <person name="Harrison P.F."/>
            <person name="Jenkin G.A."/>
            <person name="Davies J.K."/>
            <person name="Johnson P.D."/>
            <person name="Abdellah Z."/>
            <person name="Arrowsmith C."/>
            <person name="Chillingworth T."/>
            <person name="Churcher C."/>
            <person name="Clarke K."/>
            <person name="Cronin A."/>
            <person name="Davis P."/>
            <person name="Goodhead I."/>
            <person name="Holroyd N."/>
            <person name="Jagels K."/>
            <person name="Lord A."/>
            <person name="Moule S."/>
            <person name="Mungall K."/>
            <person name="Norbertczak H."/>
            <person name="Quail M.A."/>
            <person name="Rabbinowitsch E."/>
            <person name="Walker D."/>
            <person name="White B."/>
            <person name="Whitehead S."/>
            <person name="Small P.L."/>
            <person name="Brosch R."/>
            <person name="Ramakrishnan L."/>
            <person name="Fischbach M.A."/>
            <person name="Parkhill J."/>
            <person name="Cole S.T."/>
        </authorList>
    </citation>
    <scope>NUCLEOTIDE SEQUENCE [LARGE SCALE GENOMIC DNA]</scope>
    <source>
        <strain>ATCC BAA-535 / M</strain>
    </source>
</reference>
<dbReference type="EMBL" id="CP000854">
    <property type="protein sequence ID" value="ACC39562.1"/>
    <property type="molecule type" value="Genomic_DNA"/>
</dbReference>
<dbReference type="RefSeq" id="WP_012392993.1">
    <property type="nucleotide sequence ID" value="NC_010612.1"/>
</dbReference>
<dbReference type="SMR" id="B2HCZ0"/>
<dbReference type="STRING" id="216594.MMAR_1106"/>
<dbReference type="GeneID" id="93438526"/>
<dbReference type="KEGG" id="mmi:MMAR_1106"/>
<dbReference type="eggNOG" id="COG0102">
    <property type="taxonomic scope" value="Bacteria"/>
</dbReference>
<dbReference type="HOGENOM" id="CLU_082184_2_2_11"/>
<dbReference type="OrthoDB" id="9801330at2"/>
<dbReference type="Proteomes" id="UP000001190">
    <property type="component" value="Chromosome"/>
</dbReference>
<dbReference type="GO" id="GO:0022625">
    <property type="term" value="C:cytosolic large ribosomal subunit"/>
    <property type="evidence" value="ECO:0007669"/>
    <property type="project" value="TreeGrafter"/>
</dbReference>
<dbReference type="GO" id="GO:0003729">
    <property type="term" value="F:mRNA binding"/>
    <property type="evidence" value="ECO:0007669"/>
    <property type="project" value="TreeGrafter"/>
</dbReference>
<dbReference type="GO" id="GO:0003735">
    <property type="term" value="F:structural constituent of ribosome"/>
    <property type="evidence" value="ECO:0007669"/>
    <property type="project" value="InterPro"/>
</dbReference>
<dbReference type="GO" id="GO:0017148">
    <property type="term" value="P:negative regulation of translation"/>
    <property type="evidence" value="ECO:0007669"/>
    <property type="project" value="TreeGrafter"/>
</dbReference>
<dbReference type="GO" id="GO:0006412">
    <property type="term" value="P:translation"/>
    <property type="evidence" value="ECO:0007669"/>
    <property type="project" value="UniProtKB-UniRule"/>
</dbReference>
<dbReference type="CDD" id="cd00392">
    <property type="entry name" value="Ribosomal_L13"/>
    <property type="match status" value="1"/>
</dbReference>
<dbReference type="FunFam" id="3.90.1180.10:FF:000001">
    <property type="entry name" value="50S ribosomal protein L13"/>
    <property type="match status" value="1"/>
</dbReference>
<dbReference type="Gene3D" id="3.90.1180.10">
    <property type="entry name" value="Ribosomal protein L13"/>
    <property type="match status" value="1"/>
</dbReference>
<dbReference type="HAMAP" id="MF_01366">
    <property type="entry name" value="Ribosomal_uL13"/>
    <property type="match status" value="1"/>
</dbReference>
<dbReference type="InterPro" id="IPR005822">
    <property type="entry name" value="Ribosomal_uL13"/>
</dbReference>
<dbReference type="InterPro" id="IPR005823">
    <property type="entry name" value="Ribosomal_uL13_bac-type"/>
</dbReference>
<dbReference type="InterPro" id="IPR023563">
    <property type="entry name" value="Ribosomal_uL13_CS"/>
</dbReference>
<dbReference type="InterPro" id="IPR036899">
    <property type="entry name" value="Ribosomal_uL13_sf"/>
</dbReference>
<dbReference type="NCBIfam" id="TIGR01066">
    <property type="entry name" value="rplM_bact"/>
    <property type="match status" value="1"/>
</dbReference>
<dbReference type="PANTHER" id="PTHR11545:SF2">
    <property type="entry name" value="LARGE RIBOSOMAL SUBUNIT PROTEIN UL13M"/>
    <property type="match status" value="1"/>
</dbReference>
<dbReference type="PANTHER" id="PTHR11545">
    <property type="entry name" value="RIBOSOMAL PROTEIN L13"/>
    <property type="match status" value="1"/>
</dbReference>
<dbReference type="Pfam" id="PF00572">
    <property type="entry name" value="Ribosomal_L13"/>
    <property type="match status" value="1"/>
</dbReference>
<dbReference type="PIRSF" id="PIRSF002181">
    <property type="entry name" value="Ribosomal_L13"/>
    <property type="match status" value="1"/>
</dbReference>
<dbReference type="SUPFAM" id="SSF52161">
    <property type="entry name" value="Ribosomal protein L13"/>
    <property type="match status" value="1"/>
</dbReference>
<dbReference type="PROSITE" id="PS00783">
    <property type="entry name" value="RIBOSOMAL_L13"/>
    <property type="match status" value="1"/>
</dbReference>
<proteinExistence type="inferred from homology"/>
<protein>
    <recommendedName>
        <fullName evidence="1">Large ribosomal subunit protein uL13</fullName>
    </recommendedName>
    <alternativeName>
        <fullName evidence="2">50S ribosomal protein L13</fullName>
    </alternativeName>
</protein>
<evidence type="ECO:0000255" key="1">
    <source>
        <dbReference type="HAMAP-Rule" id="MF_01366"/>
    </source>
</evidence>
<evidence type="ECO:0000305" key="2"/>